<dbReference type="EC" id="3.1.1.117" evidence="4"/>
<dbReference type="EMBL" id="AY281368">
    <property type="protein sequence ID" value="AAP57749.1"/>
    <property type="molecule type" value="mRNA"/>
</dbReference>
<dbReference type="EMBL" id="GL985083">
    <property type="protein sequence ID" value="EGR44948.1"/>
    <property type="molecule type" value="Genomic_DNA"/>
</dbReference>
<dbReference type="RefSeq" id="XP_006969119.1">
    <property type="nucleotide sequence ID" value="XM_006969057.1"/>
</dbReference>
<dbReference type="PDB" id="3PIC">
    <property type="method" value="X-ray"/>
    <property type="resolution" value="1.90 A"/>
    <property type="chains" value="A/B/C=90-460"/>
</dbReference>
<dbReference type="PDBsum" id="3PIC"/>
<dbReference type="SMR" id="G0RV93"/>
<dbReference type="STRING" id="431241.G0RV93"/>
<dbReference type="CAZy" id="CBM1">
    <property type="family name" value="Carbohydrate-Binding Module Family 1"/>
</dbReference>
<dbReference type="ESTHER" id="hypjq-cip2">
    <property type="family name" value="Glucuronoyl_esterase"/>
</dbReference>
<dbReference type="GlyCosmos" id="G0RV93">
    <property type="glycosylation" value="1 site, No reported glycans"/>
</dbReference>
<dbReference type="iPTMnet" id="G0RV93"/>
<dbReference type="EnsemblFungi" id="EGR44948">
    <property type="protein sequence ID" value="EGR44948"/>
    <property type="gene ID" value="TRIREDRAFT_123940"/>
</dbReference>
<dbReference type="GeneID" id="18483767"/>
<dbReference type="KEGG" id="tre:TRIREDRAFT_123940"/>
<dbReference type="VEuPathDB" id="FungiDB:TRIREDRAFT_123940"/>
<dbReference type="eggNOG" id="ENOG502QS8Y">
    <property type="taxonomic scope" value="Eukaryota"/>
</dbReference>
<dbReference type="HOGENOM" id="CLU_028869_1_1_1"/>
<dbReference type="OrthoDB" id="3781271at2759"/>
<dbReference type="BRENDA" id="3.1.1.117">
    <property type="organism ID" value="6451"/>
</dbReference>
<dbReference type="EvolutionaryTrace" id="G0RV93"/>
<dbReference type="Proteomes" id="UP000008984">
    <property type="component" value="Unassembled WGS sequence"/>
</dbReference>
<dbReference type="GO" id="GO:0005576">
    <property type="term" value="C:extracellular region"/>
    <property type="evidence" value="ECO:0007669"/>
    <property type="project" value="UniProtKB-SubCell"/>
</dbReference>
<dbReference type="GO" id="GO:0052689">
    <property type="term" value="F:carboxylic ester hydrolase activity"/>
    <property type="evidence" value="ECO:0007669"/>
    <property type="project" value="UniProtKB-KW"/>
</dbReference>
<dbReference type="GO" id="GO:0030248">
    <property type="term" value="F:cellulose binding"/>
    <property type="evidence" value="ECO:0007669"/>
    <property type="project" value="InterPro"/>
</dbReference>
<dbReference type="GO" id="GO:0005975">
    <property type="term" value="P:carbohydrate metabolic process"/>
    <property type="evidence" value="ECO:0007669"/>
    <property type="project" value="InterPro"/>
</dbReference>
<dbReference type="GO" id="GO:0046274">
    <property type="term" value="P:lignin catabolic process"/>
    <property type="evidence" value="ECO:0007669"/>
    <property type="project" value="UniProtKB-KW"/>
</dbReference>
<dbReference type="Gene3D" id="3.40.50.1820">
    <property type="entry name" value="alpha/beta hydrolase"/>
    <property type="match status" value="1"/>
</dbReference>
<dbReference type="InterPro" id="IPR029058">
    <property type="entry name" value="AB_hydrolase_fold"/>
</dbReference>
<dbReference type="InterPro" id="IPR035971">
    <property type="entry name" value="CBD_sf"/>
</dbReference>
<dbReference type="InterPro" id="IPR000254">
    <property type="entry name" value="Cellulose-bd_dom_fun"/>
</dbReference>
<dbReference type="InterPro" id="IPR054579">
    <property type="entry name" value="GCE-like_dom"/>
</dbReference>
<dbReference type="Pfam" id="PF00734">
    <property type="entry name" value="CBM_1"/>
    <property type="match status" value="1"/>
</dbReference>
<dbReference type="Pfam" id="PF22244">
    <property type="entry name" value="GCE_fung"/>
    <property type="match status" value="1"/>
</dbReference>
<dbReference type="SMART" id="SM00236">
    <property type="entry name" value="fCBD"/>
    <property type="match status" value="1"/>
</dbReference>
<dbReference type="SUPFAM" id="SSF53474">
    <property type="entry name" value="alpha/beta-Hydrolases"/>
    <property type="match status" value="1"/>
</dbReference>
<dbReference type="SUPFAM" id="SSF57180">
    <property type="entry name" value="Cellulose-binding domain"/>
    <property type="match status" value="1"/>
</dbReference>
<dbReference type="PROSITE" id="PS00562">
    <property type="entry name" value="CBM1_1"/>
    <property type="match status" value="1"/>
</dbReference>
<dbReference type="PROSITE" id="PS51164">
    <property type="entry name" value="CBM1_2"/>
    <property type="match status" value="1"/>
</dbReference>
<gene>
    <name evidence="6" type="primary">cip2</name>
    <name type="ORF">TRIREDRAFT_123940</name>
</gene>
<accession>G0RV93</accession>
<accession>Q7Z9N1</accession>
<evidence type="ECO:0000250" key="1">
    <source>
        <dbReference type="UniProtKB" id="G2QJR6"/>
    </source>
</evidence>
<evidence type="ECO:0000255" key="2">
    <source>
        <dbReference type="PROSITE-ProRule" id="PRU00597"/>
    </source>
</evidence>
<evidence type="ECO:0000269" key="3">
    <source>
    </source>
</evidence>
<evidence type="ECO:0000269" key="4">
    <source>
    </source>
</evidence>
<evidence type="ECO:0000269" key="5">
    <source>
    </source>
</evidence>
<evidence type="ECO:0000303" key="6">
    <source>
    </source>
</evidence>
<evidence type="ECO:0000303" key="7">
    <source>
    </source>
</evidence>
<evidence type="ECO:0000305" key="8"/>
<evidence type="ECO:0000305" key="9">
    <source>
    </source>
</evidence>
<evidence type="ECO:0000305" key="10">
    <source>
    </source>
</evidence>
<evidence type="ECO:0007829" key="11">
    <source>
        <dbReference type="PDB" id="3PIC"/>
    </source>
</evidence>
<comment type="function">
    <text evidence="3 4">Glucuronoyl esterase which may play a significant role in biomass degradation, as it is considered to disconnect hemicellulose from lignin through the hydrolysis of the ester bond between 4-O-methyl-D-glucuronic acid residues of glucuronoxylans and aromatic alcohols of lignin. Does not hydrolyze substrates of other carbohydrate esterases such as acetylxylan esterase, acetyl esterase and feruloyl esterase.</text>
</comment>
<comment type="catalytic activity">
    <reaction evidence="4">
        <text>a 4-O-methyl-alpha-D-glucuronosyl ester derivative + H2O = 4-O-methyl-alpha-D-glucuronate derivative + an alcohol + H(+)</text>
        <dbReference type="Rhea" id="RHEA:67452"/>
        <dbReference type="ChEBI" id="CHEBI:15377"/>
        <dbReference type="ChEBI" id="CHEBI:15378"/>
        <dbReference type="ChEBI" id="CHEBI:30879"/>
        <dbReference type="ChEBI" id="CHEBI:171667"/>
        <dbReference type="ChEBI" id="CHEBI:171668"/>
        <dbReference type="EC" id="3.1.1.117"/>
    </reaction>
    <physiologicalReaction direction="left-to-right" evidence="9">
        <dbReference type="Rhea" id="RHEA:67453"/>
    </physiologicalReaction>
</comment>
<comment type="biophysicochemical properties">
    <kinetics>
        <KM evidence="4">0.5 mM for 4-nitrophenyl 2-O-(methyl-4-O-methyl-alpha-D-glucopyranosyluronate)-beta-D-xylopyranoside</KM>
        <Vmax evidence="4">5.5 umol/min/mg enzyme toward 4-nitrophenyl 2-O-(methyl-4-O-methyl-alpha-D-glucopyranosyluronate)-beta-D-xylopyranoside</Vmax>
    </kinetics>
    <phDependence>
        <text evidence="4">Optimum pH is 5.5.</text>
    </phDependence>
    <temperatureDependence>
        <text evidence="4">Optimum temperature is 40-60 degrees Celsius.</text>
    </temperatureDependence>
</comment>
<comment type="subcellular location">
    <subcellularLocation>
        <location evidence="8">Secreted</location>
    </subcellularLocation>
</comment>
<comment type="induction">
    <text evidence="3">Induced in the presence of lactose or sophorose.</text>
</comment>
<comment type="similarity">
    <text evidence="8">Belongs to the carbohydrate esterase 15 (CE15) family.</text>
</comment>
<organism>
    <name type="scientific">Hypocrea jecorina (strain QM6a)</name>
    <name type="common">Trichoderma reesei</name>
    <dbReference type="NCBI Taxonomy" id="431241"/>
    <lineage>
        <taxon>Eukaryota</taxon>
        <taxon>Fungi</taxon>
        <taxon>Dikarya</taxon>
        <taxon>Ascomycota</taxon>
        <taxon>Pezizomycotina</taxon>
        <taxon>Sordariomycetes</taxon>
        <taxon>Hypocreomycetidae</taxon>
        <taxon>Hypocreales</taxon>
        <taxon>Hypocreaceae</taxon>
        <taxon>Trichoderma</taxon>
    </lineage>
</organism>
<proteinExistence type="evidence at protein level"/>
<reference key="1">
    <citation type="journal article" date="2003" name="J. Biol. Chem.">
        <title>Transcriptional regulation of biomass-degrading enzymes in the filamentous fungus Trichoderma reesei.</title>
        <authorList>
            <person name="Foreman P.K."/>
            <person name="Brown D."/>
            <person name="Dankmeyer L."/>
            <person name="Dean R."/>
            <person name="Diener S."/>
            <person name="Dunn-Coleman N.S."/>
            <person name="Goedegebuur F."/>
            <person name="Houfek T.D."/>
            <person name="England G.J."/>
            <person name="Kelley A.S."/>
            <person name="Meerman H.J."/>
            <person name="Mitchell T."/>
            <person name="Mitchinson C."/>
            <person name="Olivares H.A."/>
            <person name="Teunissen P.J.M."/>
            <person name="Yao J."/>
            <person name="Ward M."/>
        </authorList>
    </citation>
    <scope>NUCLEOTIDE SEQUENCE [MRNA]</scope>
    <scope>INDUCTION</scope>
    <scope>FUNCTION</scope>
    <scope>DOMAIN</scope>
    <source>
        <strain>QM6a</strain>
    </source>
</reference>
<reference key="2">
    <citation type="journal article" date="2008" name="Nat. Biotechnol.">
        <title>Genome sequencing and analysis of the biomass-degrading fungus Trichoderma reesei (syn. Hypocrea jecorina).</title>
        <authorList>
            <person name="Martinez D."/>
            <person name="Berka R.M."/>
            <person name="Henrissat B."/>
            <person name="Saloheimo M."/>
            <person name="Arvas M."/>
            <person name="Baker S.E."/>
            <person name="Chapman J."/>
            <person name="Chertkov O."/>
            <person name="Coutinho P.M."/>
            <person name="Cullen D."/>
            <person name="Danchin E.G."/>
            <person name="Grigoriev I.V."/>
            <person name="Harris P."/>
            <person name="Jackson M."/>
            <person name="Kubicek C.P."/>
            <person name="Han C.S."/>
            <person name="Ho I."/>
            <person name="Larrondo L.F."/>
            <person name="de Leon A.L."/>
            <person name="Magnuson J.K."/>
            <person name="Merino S."/>
            <person name="Misra M."/>
            <person name="Nelson B."/>
            <person name="Putnam N."/>
            <person name="Robbertse B."/>
            <person name="Salamov A.A."/>
            <person name="Schmoll M."/>
            <person name="Terry A."/>
            <person name="Thayer N."/>
            <person name="Westerholm-Parvinen A."/>
            <person name="Schoch C.L."/>
            <person name="Yao J."/>
            <person name="Barabote R."/>
            <person name="Nelson M.A."/>
            <person name="Detter C."/>
            <person name="Bruce D."/>
            <person name="Kuske C.R."/>
            <person name="Xie G."/>
            <person name="Richardson P."/>
            <person name="Rokhsar D.S."/>
            <person name="Lucas S.M."/>
            <person name="Rubin E.M."/>
            <person name="Dunn-Coleman N."/>
            <person name="Ward M."/>
            <person name="Brettin T.S."/>
        </authorList>
    </citation>
    <scope>NUCLEOTIDE SEQUENCE [LARGE SCALE GENOMIC DNA]</scope>
    <source>
        <strain>QM6a</strain>
    </source>
</reference>
<reference key="3">
    <citation type="journal article" date="2007" name="FEBS Lett.">
        <title>Identification of genes encoding microbial glucuronoyl esterases.</title>
        <authorList>
            <person name="Li X.L."/>
            <person name="Spanikova S."/>
            <person name="de Vries R.P."/>
            <person name="Biely P."/>
        </authorList>
    </citation>
    <scope>PROTEIN SEQUENCE OF 19-28</scope>
    <scope>IDENTIFICATION BY MASS SPECTROMETRY</scope>
    <scope>FUNCTION</scope>
    <scope>BIOPHYSICOCHEMICAL PROPERTIES</scope>
    <scope>PYROGLUTAMATE FORMATION AT GLN-18</scope>
</reference>
<reference key="4">
    <citation type="journal article" date="2011" name="Proteins">
        <title>Structure of the catalytic domain of glucuronoyl esterase Cip2 from Hypocrea jecorina.</title>
        <authorList>
            <person name="Pokkuluri P.R."/>
            <person name="Duke N.E."/>
            <person name="Wood S.J."/>
            <person name="Cotta M.A."/>
            <person name="Li X.L."/>
            <person name="Biely P."/>
            <person name="Schiffer M."/>
        </authorList>
    </citation>
    <scope>X-RAY CRYSTALLOGRAPHY (1.90 ANGSTROMS) OF 90-460</scope>
    <scope>PUTATIVE ACTIVE SITE</scope>
    <scope>DISULFIDE BONDS</scope>
    <scope>GLYCOSYLATION AT ASN-447</scope>
</reference>
<protein>
    <recommendedName>
        <fullName evidence="8">4-O-methyl-glucuronoyl methylesterase</fullName>
        <ecNumber evidence="4">3.1.1.117</ecNumber>
    </recommendedName>
    <alternativeName>
        <fullName evidence="7">Glucuronoyl esterase</fullName>
        <shortName evidence="7">GE</shortName>
    </alternativeName>
</protein>
<sequence>MASRFFALLLLAIPIQAQSPVWGQCGGIGWSGPTTCVGGATCVSYNPYYSQCIPSTQASSSIASTTLVTSFTTTTATRTSASTPPASSTGAGGATCSALPGSITLRSNAKLNDLFTMFNGDKVTTKDKFSCRQAEMSELIQRYELGTLPGRPSTLTASFSGNTLTINCGEAGKSISFTVTITYPSSGTAPYPAIIGYGGGSLPAPAGVAMINFNNDNIAAQVNTGSRGQGKFYDLYGSSHSAGAMTAWAWGVSRVIDALELVPGARIDTTKIGVTGCSRNGKGAMVAGAFEKRIVLTLPQESGAGGSACWRISDYLKSQGANIQTASEIIGEDPWFSTTFNSYVNQVPVLPFDHHSLAALIAPRGLFVIDNNIDWLGPQSCFGCMTAAHMAWQALGVSDHMGYSQIGAHAHCAFPSNQQSQLTAFVQKFLLGQSTNTAIFQSDFSANQSQWIDWTTPTLS</sequence>
<name>GCE_HYPJQ</name>
<keyword id="KW-0002">3D-structure</keyword>
<keyword id="KW-0903">Direct protein sequencing</keyword>
<keyword id="KW-1015">Disulfide bond</keyword>
<keyword id="KW-0325">Glycoprotein</keyword>
<keyword id="KW-0378">Hydrolase</keyword>
<keyword id="KW-0439">Lignin degradation</keyword>
<keyword id="KW-0873">Pyrrolidone carboxylic acid</keyword>
<keyword id="KW-1185">Reference proteome</keyword>
<keyword id="KW-0964">Secreted</keyword>
<keyword id="KW-0719">Serine esterase</keyword>
<keyword id="KW-0732">Signal</keyword>
<feature type="signal peptide" evidence="9">
    <location>
        <begin position="1"/>
        <end position="17"/>
    </location>
</feature>
<feature type="chain" id="PRO_0000419175" description="4-O-methyl-glucuronoyl methylesterase">
    <location>
        <begin position="18"/>
        <end position="460"/>
    </location>
</feature>
<feature type="domain" description="CBM1" evidence="2">
    <location>
        <begin position="18"/>
        <end position="53"/>
    </location>
</feature>
<feature type="short sequence motif" description="GXSYXG catalytic site motif" evidence="10">
    <location>
        <begin position="276"/>
        <end position="281"/>
    </location>
</feature>
<feature type="active site" description="Nucleophile" evidence="10">
    <location>
        <position position="278"/>
    </location>
</feature>
<feature type="active site" description="Proton donor/acceptor" evidence="10">
    <location>
        <position position="411"/>
    </location>
</feature>
<feature type="binding site" evidence="1">
    <location>
        <position position="282"/>
    </location>
    <ligand>
        <name>substrate</name>
    </ligand>
</feature>
<feature type="binding site" evidence="1">
    <location>
        <position position="324"/>
    </location>
    <ligand>
        <name>substrate</name>
    </ligand>
</feature>
<feature type="binding site" evidence="1">
    <location>
        <position position="332"/>
    </location>
    <ligand>
        <name>substrate</name>
    </ligand>
</feature>
<feature type="binding site" evidence="1">
    <location>
        <position position="375"/>
    </location>
    <ligand>
        <name>substrate</name>
    </ligand>
</feature>
<feature type="modified residue" description="Pyrrolidone carboxylic acid" evidence="4">
    <location>
        <position position="18"/>
    </location>
</feature>
<feature type="glycosylation site" description="N-linked (GlcNAc...) asparagine" evidence="5">
    <location>
        <position position="447"/>
    </location>
</feature>
<feature type="disulfide bond" evidence="1">
    <location>
        <begin position="96"/>
        <end position="131"/>
    </location>
</feature>
<feature type="disulfide bond" evidence="5">
    <location>
        <begin position="277"/>
        <end position="412"/>
    </location>
</feature>
<feature type="disulfide bond" evidence="5">
    <location>
        <begin position="309"/>
        <end position="384"/>
    </location>
</feature>
<feature type="helix" evidence="11">
    <location>
        <begin position="126"/>
        <end position="143"/>
    </location>
</feature>
<feature type="strand" evidence="11">
    <location>
        <begin position="153"/>
        <end position="160"/>
    </location>
</feature>
<feature type="strand" evidence="11">
    <location>
        <begin position="163"/>
        <end position="170"/>
    </location>
</feature>
<feature type="strand" evidence="11">
    <location>
        <begin position="173"/>
        <end position="182"/>
    </location>
</feature>
<feature type="strand" evidence="11">
    <location>
        <begin position="185"/>
        <end position="187"/>
    </location>
</feature>
<feature type="strand" evidence="11">
    <location>
        <begin position="189"/>
        <end position="197"/>
    </location>
</feature>
<feature type="strand" evidence="11">
    <location>
        <begin position="209"/>
        <end position="213"/>
    </location>
</feature>
<feature type="helix" evidence="11">
    <location>
        <begin position="215"/>
        <end position="218"/>
    </location>
</feature>
<feature type="helix" evidence="11">
    <location>
        <begin position="224"/>
        <end position="226"/>
    </location>
</feature>
<feature type="helix" evidence="11">
    <location>
        <begin position="231"/>
        <end position="236"/>
    </location>
</feature>
<feature type="helix" evidence="11">
    <location>
        <begin position="244"/>
        <end position="261"/>
    </location>
</feature>
<feature type="helix" evidence="11">
    <location>
        <begin position="263"/>
        <end position="265"/>
    </location>
</feature>
<feature type="strand" evidence="11">
    <location>
        <begin position="267"/>
        <end position="277"/>
    </location>
</feature>
<feature type="helix" evidence="11">
    <location>
        <begin position="279"/>
        <end position="290"/>
    </location>
</feature>
<feature type="strand" evidence="11">
    <location>
        <begin position="294"/>
        <end position="301"/>
    </location>
</feature>
<feature type="turn" evidence="11">
    <location>
        <begin position="304"/>
        <end position="307"/>
    </location>
</feature>
<feature type="helix" evidence="11">
    <location>
        <begin position="310"/>
        <end position="318"/>
    </location>
</feature>
<feature type="helix" evidence="11">
    <location>
        <begin position="326"/>
        <end position="329"/>
    </location>
</feature>
<feature type="turn" evidence="11">
    <location>
        <begin position="330"/>
        <end position="332"/>
    </location>
</feature>
<feature type="helix" evidence="11">
    <location>
        <begin position="338"/>
        <end position="342"/>
    </location>
</feature>
<feature type="turn" evidence="11">
    <location>
        <begin position="343"/>
        <end position="345"/>
    </location>
</feature>
<feature type="helix" evidence="11">
    <location>
        <begin position="347"/>
        <end position="349"/>
    </location>
</feature>
<feature type="helix" evidence="11">
    <location>
        <begin position="354"/>
        <end position="359"/>
    </location>
</feature>
<feature type="strand" evidence="11">
    <location>
        <begin position="364"/>
        <end position="369"/>
    </location>
</feature>
<feature type="helix" evidence="11">
    <location>
        <begin position="374"/>
        <end position="376"/>
    </location>
</feature>
<feature type="helix" evidence="11">
    <location>
        <begin position="378"/>
        <end position="394"/>
    </location>
</feature>
<feature type="helix" evidence="11">
    <location>
        <begin position="398"/>
        <end position="400"/>
    </location>
</feature>
<feature type="strand" evidence="11">
    <location>
        <begin position="401"/>
        <end position="404"/>
    </location>
</feature>
<feature type="helix" evidence="11">
    <location>
        <begin position="416"/>
        <end position="418"/>
    </location>
</feature>
<feature type="helix" evidence="11">
    <location>
        <begin position="419"/>
        <end position="429"/>
    </location>
</feature>
<feature type="helix" evidence="11">
    <location>
        <begin position="448"/>
        <end position="451"/>
    </location>
</feature>